<sequence>MDNPQALPLFLLLASLVGILTLRASSGLQQTNFSSAFSSDSKSSSQGLGVEVPSIKPPSWKVPDQFLDSKASAGISDSSWFPEALSSNMSGSFWSNVSAEGQDLSPVSPFSETPGSEVFPDISDPQVPAKDPKPSFTVKTPASNISTQVSHTKLSVEAPDSKFSPDDMDLKLSAQSPESKFSAETHSAASFPQQVGGPLAVLVGTTIRLPLVPIPNPGPPTSLVVWRRGSKVLAAGGLGPGAPLISLDPAHRDHLRFDQARGVLELASAQLDDAGVYTAEVIRAGVSQQTHEFTVGVYEPLPQLSVQPKAPETEEGAAELRLRCLGWGPGRGELSWSRDGRALEAAESEGAETPRMRSEGDQLLIVRPVRSDHARYTCRVRSPFGHREAAADVSVFYGPDPPTITVSSDRDAAPARFVTAGSNVTLRCAAASRPPADITWSLADPAEAAVPAGSRLLLPAVGPGHAGTYACLAANPRTGRRRRSLLNLTVADLPPGAPQCSVEGGPGDRSLRFRCSWPGGAPAASLQFQGLPEGIRAGPVSSVLLAAVPAHPRLSGVPITCLARHLVATRTCTVTPEAPREVLLHPLVAETRLGEAEVALEASGCPPPSRASWAREGRPLAPGGGSRLRLSQDGRKLHIGNFSLDWDLGNYSVLCSGALGAGGDQITLIGPSISSWRLQRARDAAVLTWDVERGALISSFEIQAWPDGPALGRTSTYRDWVSLLILGPQERSAVVPLPPRNPGTWTFRILPILGGQPGTPSQSRVYRAGPTLSHGAIAGIVLGSLLGLALLAVLLLLCICCLCRFRGKTPEKKKHPSTLVPVVTPSEKKMHSVTPVEISWPLDLKVPLEDHSSTRAYQAQTPVQLSL</sequence>
<comment type="subcellular location">
    <subcellularLocation>
        <location evidence="7">Membrane</location>
        <topology evidence="7">Single-pass type I membrane protein</topology>
    </subcellularLocation>
</comment>
<comment type="alternative products">
    <event type="alternative splicing"/>
    <isoform>
        <id>Q86VR7-1</id>
        <name>1</name>
        <sequence type="displayed"/>
    </isoform>
    <isoform>
        <id>Q86VR7-2</id>
        <name>2</name>
        <sequence type="described" ref="VSP_039374"/>
    </isoform>
</comment>
<comment type="tissue specificity">
    <text evidence="5">Expressed in the esophagus, particularly in the suprabasilar layers of the epithelium. Expression is largely reduced in esophageal metaplasia, dysplasia, and adenocarcinoma lesions.</text>
</comment>
<organism>
    <name type="scientific">Homo sapiens</name>
    <name type="common">Human</name>
    <dbReference type="NCBI Taxonomy" id="9606"/>
    <lineage>
        <taxon>Eukaryota</taxon>
        <taxon>Metazoa</taxon>
        <taxon>Chordata</taxon>
        <taxon>Craniata</taxon>
        <taxon>Vertebrata</taxon>
        <taxon>Euteleostomi</taxon>
        <taxon>Mammalia</taxon>
        <taxon>Eutheria</taxon>
        <taxon>Euarchontoglires</taxon>
        <taxon>Primates</taxon>
        <taxon>Haplorrhini</taxon>
        <taxon>Catarrhini</taxon>
        <taxon>Hominidae</taxon>
        <taxon>Homo</taxon>
    </lineage>
</organism>
<dbReference type="EMBL" id="AC008750">
    <property type="status" value="NOT_ANNOTATED_CDS"/>
    <property type="molecule type" value="Genomic_DNA"/>
</dbReference>
<dbReference type="EMBL" id="BC049212">
    <property type="protein sequence ID" value="AAH49212.1"/>
    <property type="molecule type" value="mRNA"/>
</dbReference>
<dbReference type="CCDS" id="CCDS54300.1">
    <molecule id="Q86VR7-1"/>
</dbReference>
<dbReference type="RefSeq" id="NP_001157394.1">
    <molecule id="Q86VR7-1"/>
    <property type="nucleotide sequence ID" value="NM_001163922.3"/>
</dbReference>
<dbReference type="RefSeq" id="XP_054175822.1">
    <molecule id="Q86VR7-2"/>
    <property type="nucleotide sequence ID" value="XM_054319847.1"/>
</dbReference>
<dbReference type="BioGRID" id="127065">
    <property type="interactions" value="3"/>
</dbReference>
<dbReference type="FunCoup" id="Q86VR7">
    <property type="interactions" value="638"/>
</dbReference>
<dbReference type="IntAct" id="Q86VR7">
    <property type="interactions" value="1"/>
</dbReference>
<dbReference type="MINT" id="Q86VR7"/>
<dbReference type="STRING" id="9606.ENSP00000335623"/>
<dbReference type="GlyCosmos" id="Q86VR7">
    <property type="glycosylation" value="10 sites, 1 glycan"/>
</dbReference>
<dbReference type="GlyGen" id="Q86VR7">
    <property type="glycosylation" value="12 sites, 1 O-linked glycan (2 sites)"/>
</dbReference>
<dbReference type="iPTMnet" id="Q86VR7"/>
<dbReference type="PhosphoSitePlus" id="Q86VR7"/>
<dbReference type="SwissPalm" id="Q86VR7"/>
<dbReference type="BioMuta" id="VSIG10L"/>
<dbReference type="DMDM" id="298352661"/>
<dbReference type="jPOST" id="Q86VR7"/>
<dbReference type="MassIVE" id="Q86VR7"/>
<dbReference type="PaxDb" id="9606-ENSP00000335623"/>
<dbReference type="PeptideAtlas" id="Q86VR7"/>
<dbReference type="ProteomicsDB" id="70061">
    <molecule id="Q86VR7-1"/>
</dbReference>
<dbReference type="ProteomicsDB" id="70062">
    <molecule id="Q86VR7-2"/>
</dbReference>
<dbReference type="Antibodypedia" id="71769">
    <property type="antibodies" value="8 antibodies from 4 providers"/>
</dbReference>
<dbReference type="DNASU" id="147645"/>
<dbReference type="Ensembl" id="ENST00000335624.5">
    <molecule id="Q86VR7-1"/>
    <property type="protein sequence ID" value="ENSP00000335623.3"/>
    <property type="gene ID" value="ENSG00000186806.6"/>
</dbReference>
<dbReference type="GeneID" id="147645"/>
<dbReference type="KEGG" id="hsa:147645"/>
<dbReference type="MANE-Select" id="ENST00000335624.5">
    <property type="protein sequence ID" value="ENSP00000335623.3"/>
    <property type="RefSeq nucleotide sequence ID" value="NM_001163922.3"/>
    <property type="RefSeq protein sequence ID" value="NP_001157394.1"/>
</dbReference>
<dbReference type="UCSC" id="uc002pwf.4">
    <molecule id="Q86VR7-1"/>
    <property type="organism name" value="human"/>
</dbReference>
<dbReference type="AGR" id="HGNC:27111"/>
<dbReference type="CTD" id="147645"/>
<dbReference type="DisGeNET" id="147645"/>
<dbReference type="GeneCards" id="VSIG10L"/>
<dbReference type="HGNC" id="HGNC:27111">
    <property type="gene designation" value="VSIG10L"/>
</dbReference>
<dbReference type="HPA" id="ENSG00000186806">
    <property type="expression patterns" value="Tissue enhanced (cervix, esophagus, salivary gland, vagina)"/>
</dbReference>
<dbReference type="MIM" id="617740">
    <property type="type" value="gene"/>
</dbReference>
<dbReference type="neXtProt" id="NX_Q86VR7"/>
<dbReference type="OpenTargets" id="ENSG00000186806"/>
<dbReference type="PharmGKB" id="PA165394673"/>
<dbReference type="VEuPathDB" id="HostDB:ENSG00000186806"/>
<dbReference type="eggNOG" id="ENOG502QWIT">
    <property type="taxonomic scope" value="Eukaryota"/>
</dbReference>
<dbReference type="GeneTree" id="ENSGT00940000162314"/>
<dbReference type="HOGENOM" id="CLU_015581_0_0_1"/>
<dbReference type="InParanoid" id="Q86VR7"/>
<dbReference type="OMA" id="MSGSFWS"/>
<dbReference type="OrthoDB" id="6159398at2759"/>
<dbReference type="PAN-GO" id="Q86VR7">
    <property type="GO annotations" value="0 GO annotations based on evolutionary models"/>
</dbReference>
<dbReference type="PhylomeDB" id="Q86VR7"/>
<dbReference type="TreeFam" id="TF334050"/>
<dbReference type="PathwayCommons" id="Q86VR7"/>
<dbReference type="SignaLink" id="Q86VR7"/>
<dbReference type="BioGRID-ORCS" id="147645">
    <property type="hits" value="9 hits in 1154 CRISPR screens"/>
</dbReference>
<dbReference type="GenomeRNAi" id="147645"/>
<dbReference type="Pharos" id="Q86VR7">
    <property type="development level" value="Tdark"/>
</dbReference>
<dbReference type="PRO" id="PR:Q86VR7"/>
<dbReference type="Proteomes" id="UP000005640">
    <property type="component" value="Chromosome 19"/>
</dbReference>
<dbReference type="RNAct" id="Q86VR7">
    <property type="molecule type" value="protein"/>
</dbReference>
<dbReference type="Bgee" id="ENSG00000186806">
    <property type="expression patterns" value="Expressed in lower esophagus mucosa and 122 other cell types or tissues"/>
</dbReference>
<dbReference type="GO" id="GO:0016020">
    <property type="term" value="C:membrane"/>
    <property type="evidence" value="ECO:0007669"/>
    <property type="project" value="UniProtKB-SubCell"/>
</dbReference>
<dbReference type="GO" id="GO:0005654">
    <property type="term" value="C:nucleoplasm"/>
    <property type="evidence" value="ECO:0000314"/>
    <property type="project" value="HPA"/>
</dbReference>
<dbReference type="CDD" id="cd00096">
    <property type="entry name" value="Ig"/>
    <property type="match status" value="1"/>
</dbReference>
<dbReference type="FunFam" id="2.60.40.10:FF:002105">
    <property type="entry name" value="V-set and immunoglobulin domain containing 10 like"/>
    <property type="match status" value="1"/>
</dbReference>
<dbReference type="FunFam" id="2.60.40.10:FF:002205">
    <property type="entry name" value="V-set and immunoglobulin domain containing 10 like"/>
    <property type="match status" value="1"/>
</dbReference>
<dbReference type="Gene3D" id="2.60.40.10">
    <property type="entry name" value="Immunoglobulins"/>
    <property type="match status" value="3"/>
</dbReference>
<dbReference type="InterPro" id="IPR050831">
    <property type="entry name" value="CEA_cell_adhesion"/>
</dbReference>
<dbReference type="InterPro" id="IPR007110">
    <property type="entry name" value="Ig-like_dom"/>
</dbReference>
<dbReference type="InterPro" id="IPR036179">
    <property type="entry name" value="Ig-like_dom_sf"/>
</dbReference>
<dbReference type="InterPro" id="IPR013783">
    <property type="entry name" value="Ig-like_fold"/>
</dbReference>
<dbReference type="InterPro" id="IPR013098">
    <property type="entry name" value="Ig_I-set"/>
</dbReference>
<dbReference type="InterPro" id="IPR003599">
    <property type="entry name" value="Ig_sub"/>
</dbReference>
<dbReference type="InterPro" id="IPR003598">
    <property type="entry name" value="Ig_sub2"/>
</dbReference>
<dbReference type="PANTHER" id="PTHR44427">
    <property type="entry name" value="CARCINOEMBRYONIC ANTIGEN-RELATED CELL ADHESION MOLECULE 19"/>
    <property type="match status" value="1"/>
</dbReference>
<dbReference type="PANTHER" id="PTHR44427:SF5">
    <property type="entry name" value="V-SET AND IMMUNOGLOBULIN DOMAIN-CONTAINING PROTEIN 10-LIKE"/>
    <property type="match status" value="1"/>
</dbReference>
<dbReference type="Pfam" id="PF07679">
    <property type="entry name" value="I-set"/>
    <property type="match status" value="1"/>
</dbReference>
<dbReference type="Pfam" id="PF13895">
    <property type="entry name" value="Ig_2"/>
    <property type="match status" value="1"/>
</dbReference>
<dbReference type="SMART" id="SM00409">
    <property type="entry name" value="IG"/>
    <property type="match status" value="3"/>
</dbReference>
<dbReference type="SMART" id="SM00408">
    <property type="entry name" value="IGc2"/>
    <property type="match status" value="2"/>
</dbReference>
<dbReference type="SUPFAM" id="SSF48726">
    <property type="entry name" value="Immunoglobulin"/>
    <property type="match status" value="3"/>
</dbReference>
<dbReference type="PROSITE" id="PS50835">
    <property type="entry name" value="IG_LIKE"/>
    <property type="match status" value="2"/>
</dbReference>
<evidence type="ECO:0000255" key="1"/>
<evidence type="ECO:0000255" key="2">
    <source>
        <dbReference type="PROSITE-ProRule" id="PRU00114"/>
    </source>
</evidence>
<evidence type="ECO:0000256" key="3">
    <source>
        <dbReference type="SAM" id="MobiDB-lite"/>
    </source>
</evidence>
<evidence type="ECO:0000269" key="4">
    <source>
    </source>
</evidence>
<evidence type="ECO:0000269" key="5">
    <source>
    </source>
</evidence>
<evidence type="ECO:0000303" key="6">
    <source>
    </source>
</evidence>
<evidence type="ECO:0000305" key="7"/>
<protein>
    <recommendedName>
        <fullName>V-set and immunoglobulin domain-containing protein 10-like</fullName>
        <shortName>VSIG10-like protein</shortName>
    </recommendedName>
</protein>
<accession>Q86VR7</accession>
<name>VS10L_HUMAN</name>
<gene>
    <name type="primary">VSIG10L</name>
</gene>
<proteinExistence type="evidence at protein level"/>
<feature type="signal peptide" evidence="1">
    <location>
        <begin position="1"/>
        <end position="27"/>
    </location>
</feature>
<feature type="chain" id="PRO_0000395117" description="V-set and immunoglobulin domain-containing protein 10-like">
    <location>
        <begin position="28"/>
        <end position="867"/>
    </location>
</feature>
<feature type="topological domain" description="Extracellular" evidence="1">
    <location>
        <begin position="28"/>
        <end position="776"/>
    </location>
</feature>
<feature type="transmembrane region" description="Helical" evidence="1">
    <location>
        <begin position="777"/>
        <end position="797"/>
    </location>
</feature>
<feature type="topological domain" description="Cytoplasmic" evidence="1">
    <location>
        <begin position="798"/>
        <end position="867"/>
    </location>
</feature>
<feature type="domain" description="Ig-like C2-type 1">
    <location>
        <begin position="302"/>
        <end position="394"/>
    </location>
</feature>
<feature type="domain" description="Ig-like C2-type 2">
    <location>
        <begin position="402"/>
        <end position="487"/>
    </location>
</feature>
<feature type="region of interest" description="Disordered" evidence="3">
    <location>
        <begin position="35"/>
        <end position="60"/>
    </location>
</feature>
<feature type="region of interest" description="Disordered" evidence="3">
    <location>
        <begin position="104"/>
        <end position="186"/>
    </location>
</feature>
<feature type="region of interest" description="Disordered" evidence="3">
    <location>
        <begin position="602"/>
        <end position="627"/>
    </location>
</feature>
<feature type="compositionally biased region" description="Low complexity" evidence="3">
    <location>
        <begin position="35"/>
        <end position="45"/>
    </location>
</feature>
<feature type="compositionally biased region" description="Polar residues" evidence="3">
    <location>
        <begin position="137"/>
        <end position="153"/>
    </location>
</feature>
<feature type="compositionally biased region" description="Basic and acidic residues" evidence="3">
    <location>
        <begin position="159"/>
        <end position="170"/>
    </location>
</feature>
<feature type="compositionally biased region" description="Polar residues" evidence="3">
    <location>
        <begin position="173"/>
        <end position="186"/>
    </location>
</feature>
<feature type="glycosylation site" description="N-linked (GlcNAc...) asparagine" evidence="1">
    <location>
        <position position="32"/>
    </location>
</feature>
<feature type="glycosylation site" description="N-linked (GlcNAc...) asparagine" evidence="1">
    <location>
        <position position="88"/>
    </location>
</feature>
<feature type="glycosylation site" description="N-linked (GlcNAc...) asparagine" evidence="1">
    <location>
        <position position="96"/>
    </location>
</feature>
<feature type="glycosylation site" description="N-linked (GlcNAc...) asparagine" evidence="1">
    <location>
        <position position="144"/>
    </location>
</feature>
<feature type="glycosylation site" description="N-linked (GlcNAc...) asparagine" evidence="1">
    <location>
        <position position="423"/>
    </location>
</feature>
<feature type="glycosylation site" description="N-linked (GlcNAc...) asparagine" evidence="1">
    <location>
        <position position="487"/>
    </location>
</feature>
<feature type="glycosylation site" description="N-linked (GlcNAc...) asparagine" evidence="1">
    <location>
        <position position="641"/>
    </location>
</feature>
<feature type="glycosylation site" description="N-linked (GlcNAc...) asparagine" evidence="1">
    <location>
        <position position="650"/>
    </location>
</feature>
<feature type="disulfide bond" evidence="2">
    <location>
        <begin position="324"/>
        <end position="378"/>
    </location>
</feature>
<feature type="disulfide bond" evidence="2">
    <location>
        <begin position="428"/>
        <end position="471"/>
    </location>
</feature>
<feature type="splice variant" id="VSP_039374" description="In isoform 2." evidence="6">
    <original>QTPVQLSL</original>
    <variation>TDPSSVVSVGGGSKTVRAATQV</variation>
    <location>
        <begin position="860"/>
        <end position="867"/>
    </location>
</feature>
<feature type="sequence variant" id="VAR_063282" description="In dbSNP:rs10414211.">
    <original>N</original>
    <variation>T</variation>
    <location>
        <position position="3"/>
    </location>
</feature>
<feature type="sequence variant" id="VAR_063283" description="In dbSNP:rs7259266.">
    <original>M</original>
    <variation>I</variation>
    <location>
        <position position="356"/>
    </location>
</feature>
<feature type="sequence variant" id="VAR_063284" description="In dbSNP:rs34380065." evidence="4">
    <original>R</original>
    <variation>Q</variation>
    <location>
        <position position="592"/>
    </location>
</feature>
<feature type="sequence variant" id="VAR_063285" description="In dbSNP:rs57710066.">
    <original>R</original>
    <variation>H</variation>
    <location>
        <position position="627"/>
    </location>
</feature>
<feature type="sequence variant" id="VAR_080077" description="Found in a family with Barrett esophagus and esophageal adenocarcinoma; uncertain significance; dbSNP:rs1263178238." evidence="5">
    <original>S</original>
    <variation>G</variation>
    <location>
        <position position="631"/>
    </location>
</feature>
<feature type="sequence variant" id="VAR_080078" description="Found in esophageal adenocarcinoma; uncertain significance; somatic mutation; dbSNP:rs377207472." evidence="5">
    <original>G</original>
    <variation>S</variation>
    <location>
        <position position="769"/>
    </location>
</feature>
<reference key="1">
    <citation type="journal article" date="2004" name="Nature">
        <title>The DNA sequence and biology of human chromosome 19.</title>
        <authorList>
            <person name="Grimwood J."/>
            <person name="Gordon L.A."/>
            <person name="Olsen A.S."/>
            <person name="Terry A."/>
            <person name="Schmutz J."/>
            <person name="Lamerdin J.E."/>
            <person name="Hellsten U."/>
            <person name="Goodstein D."/>
            <person name="Couronne O."/>
            <person name="Tran-Gyamfi M."/>
            <person name="Aerts A."/>
            <person name="Altherr M."/>
            <person name="Ashworth L."/>
            <person name="Bajorek E."/>
            <person name="Black S."/>
            <person name="Branscomb E."/>
            <person name="Caenepeel S."/>
            <person name="Carrano A.V."/>
            <person name="Caoile C."/>
            <person name="Chan Y.M."/>
            <person name="Christensen M."/>
            <person name="Cleland C.A."/>
            <person name="Copeland A."/>
            <person name="Dalin E."/>
            <person name="Dehal P."/>
            <person name="Denys M."/>
            <person name="Detter J.C."/>
            <person name="Escobar J."/>
            <person name="Flowers D."/>
            <person name="Fotopulos D."/>
            <person name="Garcia C."/>
            <person name="Georgescu A.M."/>
            <person name="Glavina T."/>
            <person name="Gomez M."/>
            <person name="Gonzales E."/>
            <person name="Groza M."/>
            <person name="Hammon N."/>
            <person name="Hawkins T."/>
            <person name="Haydu L."/>
            <person name="Ho I."/>
            <person name="Huang W."/>
            <person name="Israni S."/>
            <person name="Jett J."/>
            <person name="Kadner K."/>
            <person name="Kimball H."/>
            <person name="Kobayashi A."/>
            <person name="Larionov V."/>
            <person name="Leem S.-H."/>
            <person name="Lopez F."/>
            <person name="Lou Y."/>
            <person name="Lowry S."/>
            <person name="Malfatti S."/>
            <person name="Martinez D."/>
            <person name="McCready P.M."/>
            <person name="Medina C."/>
            <person name="Morgan J."/>
            <person name="Nelson K."/>
            <person name="Nolan M."/>
            <person name="Ovcharenko I."/>
            <person name="Pitluck S."/>
            <person name="Pollard M."/>
            <person name="Popkie A.P."/>
            <person name="Predki P."/>
            <person name="Quan G."/>
            <person name="Ramirez L."/>
            <person name="Rash S."/>
            <person name="Retterer J."/>
            <person name="Rodriguez A."/>
            <person name="Rogers S."/>
            <person name="Salamov A."/>
            <person name="Salazar A."/>
            <person name="She X."/>
            <person name="Smith D."/>
            <person name="Slezak T."/>
            <person name="Solovyev V."/>
            <person name="Thayer N."/>
            <person name="Tice H."/>
            <person name="Tsai M."/>
            <person name="Ustaszewska A."/>
            <person name="Vo N."/>
            <person name="Wagner M."/>
            <person name="Wheeler J."/>
            <person name="Wu K."/>
            <person name="Xie G."/>
            <person name="Yang J."/>
            <person name="Dubchak I."/>
            <person name="Furey T.S."/>
            <person name="DeJong P."/>
            <person name="Dickson M."/>
            <person name="Gordon D."/>
            <person name="Eichler E.E."/>
            <person name="Pennacchio L.A."/>
            <person name="Richardson P."/>
            <person name="Stubbs L."/>
            <person name="Rokhsar D.S."/>
            <person name="Myers R.M."/>
            <person name="Rubin E.M."/>
            <person name="Lucas S.M."/>
        </authorList>
    </citation>
    <scope>NUCLEOTIDE SEQUENCE [LARGE SCALE GENOMIC DNA]</scope>
</reference>
<reference key="2">
    <citation type="journal article" date="2004" name="Genome Res.">
        <title>The status, quality, and expansion of the NIH full-length cDNA project: the Mammalian Gene Collection (MGC).</title>
        <authorList>
            <consortium name="The MGC Project Team"/>
        </authorList>
    </citation>
    <scope>NUCLEOTIDE SEQUENCE [LARGE SCALE MRNA] OF 446-867 (ISOFORM 2)</scope>
    <scope>VARIANT GLN-592</scope>
    <source>
        <tissue>Brain</tissue>
    </source>
</reference>
<reference key="3">
    <citation type="journal article" date="2016" name="JAMA Oncol.">
        <title>Association between germline mutation in VSIG10L and familial Barrett neoplasia.</title>
        <authorList>
            <person name="Fecteau R.E."/>
            <person name="Kong J."/>
            <person name="Kresak A."/>
            <person name="Brock W."/>
            <person name="Song Y."/>
            <person name="Fujioka H."/>
            <person name="Elston R."/>
            <person name="Willis J.E."/>
            <person name="Lynch J.P."/>
            <person name="Markowitz S.D."/>
            <person name="Guda K."/>
            <person name="Chak A."/>
        </authorList>
    </citation>
    <scope>TISSUE SPECIFICITY</scope>
    <scope>VARIANTS GLY-631 AND SER-769</scope>
</reference>
<keyword id="KW-0025">Alternative splicing</keyword>
<keyword id="KW-1015">Disulfide bond</keyword>
<keyword id="KW-0325">Glycoprotein</keyword>
<keyword id="KW-0393">Immunoglobulin domain</keyword>
<keyword id="KW-0472">Membrane</keyword>
<keyword id="KW-1267">Proteomics identification</keyword>
<keyword id="KW-1185">Reference proteome</keyword>
<keyword id="KW-0677">Repeat</keyword>
<keyword id="KW-0732">Signal</keyword>
<keyword id="KW-0812">Transmembrane</keyword>
<keyword id="KW-1133">Transmembrane helix</keyword>